<protein>
    <recommendedName>
        <fullName>Guanine nucleotide-binding protein subunit alpha-13</fullName>
        <shortName>G alpha-13</shortName>
        <shortName>G-protein subunit alpha-13</shortName>
    </recommendedName>
</protein>
<proteinExistence type="evidence at protein level"/>
<reference key="1">
    <citation type="journal article" date="1991" name="Proc. Natl. Acad. Sci. U.S.A.">
        <title>G alpha 12 and G alpha 13 subunits define a fourth class of G protein alpha subunits.</title>
        <authorList>
            <person name="Strathmann M.P."/>
            <person name="Simon M.I."/>
        </authorList>
    </citation>
    <scope>NUCLEOTIDE SEQUENCE [MRNA]</scope>
    <source>
        <tissue>Brain</tissue>
    </source>
</reference>
<reference key="2">
    <citation type="journal article" date="2004" name="Genome Res.">
        <title>The status, quality, and expansion of the NIH full-length cDNA project: the Mammalian Gene Collection (MGC).</title>
        <authorList>
            <consortium name="The MGC Project Team"/>
        </authorList>
    </citation>
    <scope>NUCLEOTIDE SEQUENCE [LARGE SCALE MRNA]</scope>
    <source>
        <strain>NMRI</strain>
        <tissue>Mammary tumor</tissue>
    </source>
</reference>
<reference key="3">
    <citation type="submission" date="2007-04" db="UniProtKB">
        <authorList>
            <person name="Lubec G."/>
            <person name="Kang S.U."/>
        </authorList>
    </citation>
    <scope>PROTEIN SEQUENCE OF 51-61 AND 220-227</scope>
    <scope>IDENTIFICATION BY MASS SPECTROMETRY</scope>
    <source>
        <strain>C57BL/6J</strain>
        <tissue>Brain</tissue>
    </source>
</reference>
<reference key="4">
    <citation type="journal article" date="1989" name="Proc. Natl. Acad. Sci. U.S.A.">
        <title>Diversity of the G-protein family: sequences from five additional alpha subunits in the mouse.</title>
        <authorList>
            <person name="Strathmann M."/>
            <person name="Wilkie T.M."/>
            <person name="Simon M.I."/>
        </authorList>
    </citation>
    <scope>NUCLEOTIDE SEQUENCE [MRNA] OF 228-288</scope>
</reference>
<reference key="5">
    <citation type="journal article" date="2004" name="Proc. Natl. Acad. Sci. U.S.A.">
        <title>A role for Galpha12/Galpha13 in p120ctn regulation.</title>
        <authorList>
            <person name="Krakstad B.F."/>
            <person name="Ardawatia V.V."/>
            <person name="Aragay A.M."/>
        </authorList>
    </citation>
    <scope>INTERACTION WITH CTNND1</scope>
</reference>
<reference key="6">
    <citation type="journal article" date="2008" name="Biol. Reprod.">
        <title>RGS22, a novel testis-specific regulator of G-protein signaling involved in human and mouse spermiogenesis along with GNA12/13 subunits.</title>
        <authorList>
            <person name="Hu Y."/>
            <person name="Xing J."/>
            <person name="Chen L."/>
            <person name="Guo X."/>
            <person name="Du Y."/>
            <person name="Zhao C."/>
            <person name="Zhu Y."/>
            <person name="Lin M."/>
            <person name="Zhou Z."/>
            <person name="Sha J."/>
        </authorList>
    </citation>
    <scope>SUBCELLULAR LOCATION</scope>
    <scope>TISSUE SPECIFICITY</scope>
    <source>
        <tissue>Testis</tissue>
    </source>
</reference>
<reference key="7">
    <citation type="journal article" date="2009" name="Oncogene">
        <title>The gep oncogenes, Galpha(12) and Galpha(13), upregulate the transforming growth factor-beta1 gene.</title>
        <authorList>
            <person name="Lee S.J."/>
            <person name="Yang J.W."/>
            <person name="Cho I.J."/>
            <person name="Kim W.D."/>
            <person name="Cho M.K."/>
            <person name="Lee C.H."/>
            <person name="Kim S.G."/>
        </authorList>
    </citation>
    <scope>FUNCTION</scope>
</reference>
<reference key="8">
    <citation type="journal article" date="2010" name="Cell">
        <title>A tissue-specific atlas of mouse protein phosphorylation and expression.</title>
        <authorList>
            <person name="Huttlin E.L."/>
            <person name="Jedrychowski M.P."/>
            <person name="Elias J.E."/>
            <person name="Goswami T."/>
            <person name="Rad R."/>
            <person name="Beausoleil S.A."/>
            <person name="Villen J."/>
            <person name="Haas W."/>
            <person name="Sowa M.E."/>
            <person name="Gygi S.P."/>
        </authorList>
    </citation>
    <scope>IDENTIFICATION BY MASS SPECTROMETRY [LARGE SCALE ANALYSIS]</scope>
    <source>
        <tissue>Brain</tissue>
        <tissue>Brown adipose tissue</tissue>
        <tissue>Heart</tissue>
        <tissue>Kidney</tissue>
        <tissue>Liver</tissue>
        <tissue>Lung</tissue>
        <tissue>Pancreas</tissue>
        <tissue>Spleen</tissue>
        <tissue>Testis</tissue>
    </source>
</reference>
<reference key="9">
    <citation type="journal article" date="2011" name="Arterioscler. Thromb. Vasc. Biol.">
        <title>G(alpha)12/13 induction of CYR61 in association with arteriosclerotic intimal hyperplasia: effect of sphingosine-1-phosphate.</title>
        <authorList>
            <person name="Kim Y.M."/>
            <person name="Lim S.C."/>
            <person name="Han C.Y."/>
            <person name="Kay H.Y."/>
            <person name="Cho I.J."/>
            <person name="Ki S.H."/>
            <person name="Lee M.Y."/>
            <person name="Kwon H.M."/>
            <person name="Lee C.H."/>
            <person name="Kim S.G."/>
        </authorList>
    </citation>
    <scope>FUNCTION</scope>
</reference>
<reference key="10">
    <citation type="journal article" date="2014" name="Nature">
        <title>Loss of signalling via Galpha13 in germinal centre B-cell-derived lymphoma.</title>
        <authorList>
            <person name="Muppidi J.R."/>
            <person name="Schmitz R."/>
            <person name="Green J.A."/>
            <person name="Xiao W."/>
            <person name="Larsen A.B."/>
            <person name="Braun S.E."/>
            <person name="An J."/>
            <person name="Xu Y."/>
            <person name="Rosenwald A."/>
            <person name="Ott G."/>
            <person name="Gascoyne R.D."/>
            <person name="Rimsza L.M."/>
            <person name="Campo E."/>
            <person name="Jaffe E.S."/>
            <person name="Delabie J."/>
            <person name="Smeland E.B."/>
            <person name="Braziel R.M."/>
            <person name="Tubbs R.R."/>
            <person name="Cook J.R."/>
            <person name="Weisenburger D.D."/>
            <person name="Chan W.C."/>
            <person name="Vaidehi N."/>
            <person name="Staudt L.M."/>
            <person name="Cyster J.G."/>
        </authorList>
    </citation>
    <scope>DISRUPTION PHENOTYPE</scope>
    <scope>FUNCTION</scope>
</reference>
<reference key="11">
    <citation type="journal article" date="2006" name="Biochemistry">
        <title>A new approach to producing functional G alpha subunits yields the activated and deactivated structures of G alpha(12/13) proteins.</title>
        <authorList>
            <person name="Kreutz B."/>
            <person name="Yau D.M."/>
            <person name="Nance M.R."/>
            <person name="Tanabe S."/>
            <person name="Tesmer J.J."/>
            <person name="Kozasa T."/>
        </authorList>
    </citation>
    <scope>X-RAY CRYSTALLOGRAPHY (2.00 ANGSTROMS) OF 47-377 IN COMPLEX WITH GTP ANALOG</scope>
    <scope>FUNCTION</scope>
    <scope>SUBUNIT</scope>
    <scope>INTERACTION WITH ARHGEF1 AND ARHGEF12</scope>
</reference>
<reference key="12">
    <citation type="journal article" date="2008" name="Structure">
        <title>Recognition of the activated states of Galpha13 by the rgRGS domain of PDZRhoGEF.</title>
        <authorList>
            <person name="Chen Z."/>
            <person name="Singer W.D."/>
            <person name="Danesh S.M."/>
            <person name="Sternweis P.C."/>
            <person name="Sprang S.R."/>
        </authorList>
    </citation>
    <scope>X-RAY CRYSTALLOGRAPHY (2.00 ANGSTROMS) OF 41-377 IN COMPLEX WITH MAGNESIUM</scope>
    <scope>INTERACTION WITH ARHGEF11</scope>
</reference>
<reference key="13">
    <citation type="journal article" date="2013" name="Biochim. Biophys. Acta">
        <title>A novel Galphas-binding protein, Gas-2 like 2, facilitates the signaling of the A2A adenosine receptor.</title>
        <authorList>
            <person name="Wu Y.C."/>
            <person name="Lai H.L."/>
            <person name="Chang W.C."/>
            <person name="Lin J.T."/>
            <person name="Liu Y.J."/>
            <person name="Chern Y."/>
        </authorList>
    </citation>
    <scope>INTERACTION WITH GAS2L2</scope>
</reference>
<reference key="14">
    <citation type="journal article" date="2020" name="Nature">
        <title>A GPR174-CCL21 module imparts sexual dimorphism to humoral immunity.</title>
        <authorList>
            <person name="Zhao R."/>
            <person name="Chen X."/>
            <person name="Ma W."/>
            <person name="Zhang J."/>
            <person name="Guo J."/>
            <person name="Zhong X."/>
            <person name="Yao J."/>
            <person name="Sun J."/>
            <person name="Rubinfien J."/>
            <person name="Zhou X."/>
            <person name="Wang J."/>
            <person name="Qi H."/>
        </authorList>
    </citation>
    <scope>INTERACTION WITH GPR174</scope>
</reference>
<dbReference type="EMBL" id="M63660">
    <property type="protein sequence ID" value="AAA37649.1"/>
    <property type="molecule type" value="mRNA"/>
</dbReference>
<dbReference type="EMBL" id="BC057665">
    <property type="protein sequence ID" value="AAH57665.1"/>
    <property type="molecule type" value="mRNA"/>
</dbReference>
<dbReference type="EMBL" id="M57620">
    <property type="protein sequence ID" value="AAA63303.1"/>
    <property type="molecule type" value="mRNA"/>
</dbReference>
<dbReference type="CCDS" id="CCDS25577.1"/>
<dbReference type="PIR" id="B41095">
    <property type="entry name" value="B41095"/>
</dbReference>
<dbReference type="RefSeq" id="NP_034433.3">
    <property type="nucleotide sequence ID" value="NM_010303.3"/>
</dbReference>
<dbReference type="PDB" id="1SHZ">
    <property type="method" value="X-ray"/>
    <property type="resolution" value="2.85 A"/>
    <property type="chains" value="A/D=52-159, A/D=333-376"/>
</dbReference>
<dbReference type="PDB" id="1ZCB">
    <property type="method" value="X-ray"/>
    <property type="resolution" value="2.00 A"/>
    <property type="chains" value="A=47-377"/>
</dbReference>
<dbReference type="PDB" id="3AB3">
    <property type="method" value="X-ray"/>
    <property type="resolution" value="2.40 A"/>
    <property type="chains" value="A/C=47-377"/>
</dbReference>
<dbReference type="PDB" id="3CX6">
    <property type="method" value="X-ray"/>
    <property type="resolution" value="2.50 A"/>
    <property type="chains" value="A=41-377"/>
</dbReference>
<dbReference type="PDB" id="3CX7">
    <property type="method" value="X-ray"/>
    <property type="resolution" value="2.25 A"/>
    <property type="chains" value="A=41-377"/>
</dbReference>
<dbReference type="PDB" id="3CX8">
    <property type="method" value="X-ray"/>
    <property type="resolution" value="2.00 A"/>
    <property type="chains" value="A=41-377"/>
</dbReference>
<dbReference type="PDBsum" id="1SHZ"/>
<dbReference type="PDBsum" id="1ZCB"/>
<dbReference type="PDBsum" id="3AB3"/>
<dbReference type="PDBsum" id="3CX6"/>
<dbReference type="PDBsum" id="3CX7"/>
<dbReference type="PDBsum" id="3CX8"/>
<dbReference type="SMR" id="P27601"/>
<dbReference type="BioGRID" id="199963">
    <property type="interactions" value="24"/>
</dbReference>
<dbReference type="DIP" id="DIP-46241N"/>
<dbReference type="FunCoup" id="P27601">
    <property type="interactions" value="3968"/>
</dbReference>
<dbReference type="IntAct" id="P27601">
    <property type="interactions" value="6"/>
</dbReference>
<dbReference type="MINT" id="P27601"/>
<dbReference type="STRING" id="10090.ENSMUSP00000020930"/>
<dbReference type="GlyGen" id="P27601">
    <property type="glycosylation" value="2 sites, 1 O-linked glycan (2 sites)"/>
</dbReference>
<dbReference type="iPTMnet" id="P27601"/>
<dbReference type="PhosphoSitePlus" id="P27601"/>
<dbReference type="SwissPalm" id="P27601"/>
<dbReference type="jPOST" id="P27601"/>
<dbReference type="PaxDb" id="10090-ENSMUSP00000020930"/>
<dbReference type="PeptideAtlas" id="P27601"/>
<dbReference type="ProteomicsDB" id="267733"/>
<dbReference type="Pumba" id="P27601"/>
<dbReference type="Antibodypedia" id="31626">
    <property type="antibodies" value="270 antibodies from 31 providers"/>
</dbReference>
<dbReference type="DNASU" id="14674"/>
<dbReference type="Ensembl" id="ENSMUST00000020930.14">
    <property type="protein sequence ID" value="ENSMUSP00000020930.8"/>
    <property type="gene ID" value="ENSMUSG00000020611.15"/>
</dbReference>
<dbReference type="GeneID" id="14674"/>
<dbReference type="KEGG" id="mmu:14674"/>
<dbReference type="UCSC" id="uc007mce.1">
    <property type="organism name" value="mouse"/>
</dbReference>
<dbReference type="AGR" id="MGI:95768"/>
<dbReference type="CTD" id="10672"/>
<dbReference type="MGI" id="MGI:95768">
    <property type="gene designation" value="Gna13"/>
</dbReference>
<dbReference type="VEuPathDB" id="HostDB:ENSMUSG00000020611"/>
<dbReference type="eggNOG" id="KOG0082">
    <property type="taxonomic scope" value="Eukaryota"/>
</dbReference>
<dbReference type="GeneTree" id="ENSGT00940000157054"/>
<dbReference type="HOGENOM" id="CLU_014184_3_1_1"/>
<dbReference type="InParanoid" id="P27601"/>
<dbReference type="OMA" id="RFACMRC"/>
<dbReference type="OrthoDB" id="5817230at2759"/>
<dbReference type="PhylomeDB" id="P27601"/>
<dbReference type="TreeFam" id="TF300673"/>
<dbReference type="Reactome" id="R-MMU-193648">
    <property type="pathway name" value="NRAGE signals death through JNK"/>
</dbReference>
<dbReference type="Reactome" id="R-MMU-416482">
    <property type="pathway name" value="G alpha (12/13) signalling events"/>
</dbReference>
<dbReference type="Reactome" id="R-MMU-428930">
    <property type="pathway name" value="Thromboxane signalling through TP receptor"/>
</dbReference>
<dbReference type="Reactome" id="R-MMU-456926">
    <property type="pathway name" value="Thrombin signalling through proteinase activated receptors (PARs)"/>
</dbReference>
<dbReference type="Reactome" id="R-MMU-9013148">
    <property type="pathway name" value="CDC42 GTPase cycle"/>
</dbReference>
<dbReference type="Reactome" id="R-MMU-9013149">
    <property type="pathway name" value="RAC1 GTPase cycle"/>
</dbReference>
<dbReference type="BioGRID-ORCS" id="14674">
    <property type="hits" value="11 hits in 83 CRISPR screens"/>
</dbReference>
<dbReference type="CD-CODE" id="CE726F99">
    <property type="entry name" value="Postsynaptic density"/>
</dbReference>
<dbReference type="ChiTaRS" id="Gna13">
    <property type="organism name" value="mouse"/>
</dbReference>
<dbReference type="EvolutionaryTrace" id="P27601"/>
<dbReference type="PRO" id="PR:P27601"/>
<dbReference type="Proteomes" id="UP000000589">
    <property type="component" value="Chromosome 11"/>
</dbReference>
<dbReference type="RNAct" id="P27601">
    <property type="molecule type" value="protein"/>
</dbReference>
<dbReference type="Bgee" id="ENSMUSG00000020611">
    <property type="expression patterns" value="Expressed in rostral migratory stream and 261 other cell types or tissues"/>
</dbReference>
<dbReference type="ExpressionAtlas" id="P27601">
    <property type="expression patterns" value="baseline and differential"/>
</dbReference>
<dbReference type="GO" id="GO:0005737">
    <property type="term" value="C:cytoplasm"/>
    <property type="evidence" value="ECO:0000314"/>
    <property type="project" value="UniProtKB"/>
</dbReference>
<dbReference type="GO" id="GO:0005829">
    <property type="term" value="C:cytosol"/>
    <property type="evidence" value="ECO:0007669"/>
    <property type="project" value="Ensembl"/>
</dbReference>
<dbReference type="GO" id="GO:0005834">
    <property type="term" value="C:heterotrimeric G-protein complex"/>
    <property type="evidence" value="ECO:0000247"/>
    <property type="project" value="MGI"/>
</dbReference>
<dbReference type="GO" id="GO:0042470">
    <property type="term" value="C:melanosome"/>
    <property type="evidence" value="ECO:0007669"/>
    <property type="project" value="UniProtKB-SubCell"/>
</dbReference>
<dbReference type="GO" id="GO:0005634">
    <property type="term" value="C:nucleus"/>
    <property type="evidence" value="ECO:0000314"/>
    <property type="project" value="UniProtKB"/>
</dbReference>
<dbReference type="GO" id="GO:0005886">
    <property type="term" value="C:plasma membrane"/>
    <property type="evidence" value="ECO:0000304"/>
    <property type="project" value="Reactome"/>
</dbReference>
<dbReference type="GO" id="GO:0098794">
    <property type="term" value="C:postsynapse"/>
    <property type="evidence" value="ECO:0000314"/>
    <property type="project" value="SynGO"/>
</dbReference>
<dbReference type="GO" id="GO:0003925">
    <property type="term" value="F:G protein activity"/>
    <property type="evidence" value="ECO:0000250"/>
    <property type="project" value="UniProtKB"/>
</dbReference>
<dbReference type="GO" id="GO:0001664">
    <property type="term" value="F:G protein-coupled receptor binding"/>
    <property type="evidence" value="ECO:0007669"/>
    <property type="project" value="InterPro"/>
</dbReference>
<dbReference type="GO" id="GO:0031683">
    <property type="term" value="F:G-protein beta/gamma-subunit complex binding"/>
    <property type="evidence" value="ECO:0007669"/>
    <property type="project" value="InterPro"/>
</dbReference>
<dbReference type="GO" id="GO:0005525">
    <property type="term" value="F:GTP binding"/>
    <property type="evidence" value="ECO:0007669"/>
    <property type="project" value="UniProtKB-KW"/>
</dbReference>
<dbReference type="GO" id="GO:0003924">
    <property type="term" value="F:GTPase activity"/>
    <property type="evidence" value="ECO:0000247"/>
    <property type="project" value="MGI"/>
</dbReference>
<dbReference type="GO" id="GO:0046872">
    <property type="term" value="F:metal ion binding"/>
    <property type="evidence" value="ECO:0007669"/>
    <property type="project" value="UniProtKB-KW"/>
</dbReference>
<dbReference type="GO" id="GO:0007189">
    <property type="term" value="P:adenylate cyclase-activating G protein-coupled receptor signaling pathway"/>
    <property type="evidence" value="ECO:0000316"/>
    <property type="project" value="MGI"/>
</dbReference>
<dbReference type="GO" id="GO:0007188">
    <property type="term" value="P:adenylate cyclase-modulating G protein-coupled receptor signaling pathway"/>
    <property type="evidence" value="ECO:0000315"/>
    <property type="project" value="UniProtKB"/>
</dbReference>
<dbReference type="GO" id="GO:0001525">
    <property type="term" value="P:angiogenesis"/>
    <property type="evidence" value="ECO:0000315"/>
    <property type="project" value="MGI"/>
</dbReference>
<dbReference type="GO" id="GO:0001569">
    <property type="term" value="P:branching involved in blood vessel morphogenesis"/>
    <property type="evidence" value="ECO:0000315"/>
    <property type="project" value="MGI"/>
</dbReference>
<dbReference type="GO" id="GO:0030154">
    <property type="term" value="P:cell differentiation"/>
    <property type="evidence" value="ECO:0000314"/>
    <property type="project" value="MGI"/>
</dbReference>
<dbReference type="GO" id="GO:0007186">
    <property type="term" value="P:G protein-coupled receptor signaling pathway"/>
    <property type="evidence" value="ECO:0000247"/>
    <property type="project" value="MGI"/>
</dbReference>
<dbReference type="GO" id="GO:0001701">
    <property type="term" value="P:in utero embryonic development"/>
    <property type="evidence" value="ECO:0000316"/>
    <property type="project" value="MGI"/>
</dbReference>
<dbReference type="GO" id="GO:0035556">
    <property type="term" value="P:intracellular signal transduction"/>
    <property type="evidence" value="ECO:0000314"/>
    <property type="project" value="MGI"/>
</dbReference>
<dbReference type="GO" id="GO:1904753">
    <property type="term" value="P:negative regulation of vascular associated smooth muscle cell migration"/>
    <property type="evidence" value="ECO:0000266"/>
    <property type="project" value="MGI"/>
</dbReference>
<dbReference type="GO" id="GO:1904706">
    <property type="term" value="P:negative regulation of vascular associated smooth muscle cell proliferation"/>
    <property type="evidence" value="ECO:0000266"/>
    <property type="project" value="MGI"/>
</dbReference>
<dbReference type="GO" id="GO:0030168">
    <property type="term" value="P:platelet activation"/>
    <property type="evidence" value="ECO:0000315"/>
    <property type="project" value="MGI"/>
</dbReference>
<dbReference type="GO" id="GO:0008217">
    <property type="term" value="P:regulation of blood pressure"/>
    <property type="evidence" value="ECO:0000316"/>
    <property type="project" value="MGI"/>
</dbReference>
<dbReference type="GO" id="GO:0008360">
    <property type="term" value="P:regulation of cell shape"/>
    <property type="evidence" value="ECO:0000314"/>
    <property type="project" value="MGI"/>
</dbReference>
<dbReference type="GO" id="GO:0010762">
    <property type="term" value="P:regulation of fibroblast migration"/>
    <property type="evidence" value="ECO:0000315"/>
    <property type="project" value="MGI"/>
</dbReference>
<dbReference type="GO" id="GO:0150052">
    <property type="term" value="P:regulation of postsynapse assembly"/>
    <property type="evidence" value="ECO:0000314"/>
    <property type="project" value="SynGO"/>
</dbReference>
<dbReference type="GO" id="GO:0007266">
    <property type="term" value="P:Rho protein signal transduction"/>
    <property type="evidence" value="ECO:0000314"/>
    <property type="project" value="MGI"/>
</dbReference>
<dbReference type="GO" id="GO:0160221">
    <property type="term" value="P:Rho-activating G protein-coupled receptor signaling pathway"/>
    <property type="evidence" value="ECO:0000250"/>
    <property type="project" value="UniProtKB"/>
</dbReference>
<dbReference type="CDD" id="cd00066">
    <property type="entry name" value="G-alpha"/>
    <property type="match status" value="1"/>
</dbReference>
<dbReference type="FunFam" id="3.40.50.300:FF:000692">
    <property type="entry name" value="Guanine nucleotide-binding protein subunit alpha"/>
    <property type="match status" value="1"/>
</dbReference>
<dbReference type="FunFam" id="1.10.400.10:FF:000004">
    <property type="entry name" value="Guanine nucleotide-binding protein subunit alpha-12"/>
    <property type="match status" value="1"/>
</dbReference>
<dbReference type="FunFam" id="3.40.50.300:FF:000754">
    <property type="entry name" value="Guanine nucleotide-binding protein subunit alpha-13"/>
    <property type="match status" value="1"/>
</dbReference>
<dbReference type="Gene3D" id="1.10.400.10">
    <property type="entry name" value="GI Alpha 1, domain 2-like"/>
    <property type="match status" value="1"/>
</dbReference>
<dbReference type="Gene3D" id="3.40.50.300">
    <property type="entry name" value="P-loop containing nucleotide triphosphate hydrolases"/>
    <property type="match status" value="1"/>
</dbReference>
<dbReference type="InterPro" id="IPR000469">
    <property type="entry name" value="Gprotein_alpha_12/13"/>
</dbReference>
<dbReference type="InterPro" id="IPR001019">
    <property type="entry name" value="Gprotein_alpha_su"/>
</dbReference>
<dbReference type="InterPro" id="IPR011025">
    <property type="entry name" value="GproteinA_insert"/>
</dbReference>
<dbReference type="InterPro" id="IPR027417">
    <property type="entry name" value="P-loop_NTPase"/>
</dbReference>
<dbReference type="PANTHER" id="PTHR10218">
    <property type="entry name" value="GTP-BINDING PROTEIN ALPHA SUBUNIT"/>
    <property type="match status" value="1"/>
</dbReference>
<dbReference type="PANTHER" id="PTHR10218:SF85">
    <property type="entry name" value="GUANINE NUCLEOTIDE-BINDING PROTEIN SUBUNIT ALPHA-13"/>
    <property type="match status" value="1"/>
</dbReference>
<dbReference type="Pfam" id="PF00503">
    <property type="entry name" value="G-alpha"/>
    <property type="match status" value="1"/>
</dbReference>
<dbReference type="PRINTS" id="PR00318">
    <property type="entry name" value="GPROTEINA"/>
</dbReference>
<dbReference type="PRINTS" id="PR00440">
    <property type="entry name" value="GPROTEINA12"/>
</dbReference>
<dbReference type="SMART" id="SM00275">
    <property type="entry name" value="G_alpha"/>
    <property type="match status" value="1"/>
</dbReference>
<dbReference type="SUPFAM" id="SSF52540">
    <property type="entry name" value="P-loop containing nucleoside triphosphate hydrolases"/>
    <property type="match status" value="1"/>
</dbReference>
<dbReference type="SUPFAM" id="SSF47895">
    <property type="entry name" value="Transducin (alpha subunit), insertion domain"/>
    <property type="match status" value="1"/>
</dbReference>
<dbReference type="PROSITE" id="PS51882">
    <property type="entry name" value="G_ALPHA"/>
    <property type="match status" value="1"/>
</dbReference>
<accession>P27601</accession>
<accession>Q6PF99</accession>
<name>GNA13_MOUSE</name>
<evidence type="ECO:0000250" key="1"/>
<evidence type="ECO:0000250" key="2">
    <source>
        <dbReference type="UniProtKB" id="Q14344"/>
    </source>
</evidence>
<evidence type="ECO:0000255" key="3">
    <source>
        <dbReference type="PROSITE-ProRule" id="PRU01230"/>
    </source>
</evidence>
<evidence type="ECO:0000269" key="4">
    <source>
    </source>
</evidence>
<evidence type="ECO:0000269" key="5">
    <source>
    </source>
</evidence>
<evidence type="ECO:0000269" key="6">
    <source>
    </source>
</evidence>
<evidence type="ECO:0000269" key="7">
    <source>
    </source>
</evidence>
<evidence type="ECO:0000269" key="8">
    <source>
    </source>
</evidence>
<evidence type="ECO:0000269" key="9">
    <source>
    </source>
</evidence>
<evidence type="ECO:0000269" key="10">
    <source>
    </source>
</evidence>
<evidence type="ECO:0000269" key="11">
    <source>
    </source>
</evidence>
<evidence type="ECO:0000269" key="12">
    <source>
    </source>
</evidence>
<evidence type="ECO:0000305" key="13"/>
<evidence type="ECO:0007744" key="14">
    <source>
        <dbReference type="PDB" id="1ZCB"/>
    </source>
</evidence>
<evidence type="ECO:0007744" key="15">
    <source>
        <dbReference type="PDB" id="3CX6"/>
    </source>
</evidence>
<evidence type="ECO:0007744" key="16">
    <source>
        <dbReference type="PDB" id="3CX7"/>
    </source>
</evidence>
<evidence type="ECO:0007829" key="17">
    <source>
        <dbReference type="PDB" id="1SHZ"/>
    </source>
</evidence>
<evidence type="ECO:0007829" key="18">
    <source>
        <dbReference type="PDB" id="1ZCB"/>
    </source>
</evidence>
<evidence type="ECO:0007829" key="19">
    <source>
        <dbReference type="PDB" id="3AB3"/>
    </source>
</evidence>
<evidence type="ECO:0007829" key="20">
    <source>
        <dbReference type="PDB" id="3CX8"/>
    </source>
</evidence>
<gene>
    <name type="primary">Gna13</name>
    <name type="synonym">Gna-13</name>
</gene>
<organism>
    <name type="scientific">Mus musculus</name>
    <name type="common">Mouse</name>
    <dbReference type="NCBI Taxonomy" id="10090"/>
    <lineage>
        <taxon>Eukaryota</taxon>
        <taxon>Metazoa</taxon>
        <taxon>Chordata</taxon>
        <taxon>Craniata</taxon>
        <taxon>Vertebrata</taxon>
        <taxon>Euteleostomi</taxon>
        <taxon>Mammalia</taxon>
        <taxon>Eutheria</taxon>
        <taxon>Euarchontoglires</taxon>
        <taxon>Glires</taxon>
        <taxon>Rodentia</taxon>
        <taxon>Myomorpha</taxon>
        <taxon>Muroidea</taxon>
        <taxon>Muridae</taxon>
        <taxon>Murinae</taxon>
        <taxon>Mus</taxon>
        <taxon>Mus</taxon>
    </lineage>
</organism>
<keyword id="KW-0002">3D-structure</keyword>
<keyword id="KW-0963">Cytoplasm</keyword>
<keyword id="KW-0903">Direct protein sequencing</keyword>
<keyword id="KW-0342">GTP-binding</keyword>
<keyword id="KW-0449">Lipoprotein</keyword>
<keyword id="KW-0460">Magnesium</keyword>
<keyword id="KW-0472">Membrane</keyword>
<keyword id="KW-0479">Metal-binding</keyword>
<keyword id="KW-0547">Nucleotide-binding</keyword>
<keyword id="KW-0539">Nucleus</keyword>
<keyword id="KW-0564">Palmitate</keyword>
<keyword id="KW-0597">Phosphoprotein</keyword>
<keyword id="KW-1185">Reference proteome</keyword>
<keyword id="KW-0807">Transducer</keyword>
<feature type="chain" id="PRO_0000203774" description="Guanine nucleotide-binding protein subunit alpha-13">
    <location>
        <begin position="1"/>
        <end position="377"/>
    </location>
</feature>
<feature type="domain" description="G-alpha" evidence="3">
    <location>
        <begin position="47"/>
        <end position="377"/>
    </location>
</feature>
<feature type="region of interest" description="G1 motif" evidence="3">
    <location>
        <begin position="50"/>
        <end position="63"/>
    </location>
</feature>
<feature type="region of interest" description="G2 motif" evidence="3">
    <location>
        <begin position="195"/>
        <end position="203"/>
    </location>
</feature>
<feature type="region of interest" description="G3 motif" evidence="3">
    <location>
        <begin position="218"/>
        <end position="227"/>
    </location>
</feature>
<feature type="region of interest" description="G4 motif" evidence="3">
    <location>
        <begin position="287"/>
        <end position="294"/>
    </location>
</feature>
<feature type="region of interest" description="G5 motif" evidence="3">
    <location>
        <begin position="347"/>
        <end position="352"/>
    </location>
</feature>
<feature type="binding site" evidence="5 7 14 15 16">
    <location>
        <begin position="58"/>
        <end position="63"/>
    </location>
    <ligand>
        <name>GTP</name>
        <dbReference type="ChEBI" id="CHEBI:37565"/>
    </ligand>
</feature>
<feature type="binding site" evidence="7 15">
    <location>
        <position position="62"/>
    </location>
    <ligand>
        <name>Mg(2+)</name>
        <dbReference type="ChEBI" id="CHEBI:18420"/>
    </ligand>
</feature>
<feature type="binding site" evidence="7 16">
    <location>
        <position position="173"/>
    </location>
    <ligand>
        <name>GTP</name>
        <dbReference type="ChEBI" id="CHEBI:37565"/>
    </ligand>
</feature>
<feature type="binding site" evidence="5 7 14 15 16">
    <location>
        <begin position="197"/>
        <end position="200"/>
    </location>
    <ligand>
        <name>GTP</name>
        <dbReference type="ChEBI" id="CHEBI:37565"/>
    </ligand>
</feature>
<feature type="binding site" evidence="7 15">
    <location>
        <position position="203"/>
    </location>
    <ligand>
        <name>Mg(2+)</name>
        <dbReference type="ChEBI" id="CHEBI:18420"/>
    </ligand>
</feature>
<feature type="binding site" evidence="5 7 14 15 16">
    <location>
        <begin position="291"/>
        <end position="294"/>
    </location>
    <ligand>
        <name>GTP</name>
        <dbReference type="ChEBI" id="CHEBI:37565"/>
    </ligand>
</feature>
<feature type="binding site" evidence="5 7 14 15 16">
    <location>
        <position position="349"/>
    </location>
    <ligand>
        <name>GTP</name>
        <dbReference type="ChEBI" id="CHEBI:37565"/>
    </ligand>
</feature>
<feature type="modified residue" description="Phosphothreonine" evidence="2">
    <location>
        <position position="203"/>
    </location>
</feature>
<feature type="lipid moiety-binding region" description="S-palmitoyl cysteine" evidence="2">
    <location>
        <position position="14"/>
    </location>
</feature>
<feature type="lipid moiety-binding region" description="S-palmitoyl cysteine" evidence="2">
    <location>
        <position position="18"/>
    </location>
</feature>
<feature type="sequence conflict" description="In Ref. 2; AAH57665." evidence="13" ref="2">
    <original>L</original>
    <variation>P</variation>
    <location>
        <position position="52"/>
    </location>
</feature>
<feature type="strand" evidence="18">
    <location>
        <begin position="49"/>
        <end position="54"/>
    </location>
</feature>
<feature type="helix" evidence="18">
    <location>
        <begin position="61"/>
        <end position="72"/>
    </location>
</feature>
<feature type="helix" evidence="18">
    <location>
        <begin position="78"/>
        <end position="82"/>
    </location>
</feature>
<feature type="helix" evidence="18">
    <location>
        <begin position="85"/>
        <end position="105"/>
    </location>
</feature>
<feature type="helix" evidence="18">
    <location>
        <begin position="113"/>
        <end position="115"/>
    </location>
</feature>
<feature type="helix" evidence="18">
    <location>
        <begin position="116"/>
        <end position="123"/>
    </location>
</feature>
<feature type="strand" evidence="18">
    <location>
        <begin position="127"/>
        <end position="129"/>
    </location>
</feature>
<feature type="helix" evidence="18">
    <location>
        <begin position="130"/>
        <end position="133"/>
    </location>
</feature>
<feature type="helix" evidence="18">
    <location>
        <begin position="139"/>
        <end position="154"/>
    </location>
</feature>
<feature type="helix" evidence="18">
    <location>
        <begin position="156"/>
        <end position="163"/>
    </location>
</feature>
<feature type="helix" evidence="18">
    <location>
        <begin position="164"/>
        <end position="167"/>
    </location>
</feature>
<feature type="helix" evidence="18">
    <location>
        <begin position="174"/>
        <end position="178"/>
    </location>
</feature>
<feature type="helix" evidence="18">
    <location>
        <begin position="181"/>
        <end position="184"/>
    </location>
</feature>
<feature type="strand" evidence="17">
    <location>
        <begin position="185"/>
        <end position="188"/>
    </location>
</feature>
<feature type="helix" evidence="18">
    <location>
        <begin position="193"/>
        <end position="198"/>
    </location>
</feature>
<feature type="strand" evidence="18">
    <location>
        <begin position="204"/>
        <end position="213"/>
    </location>
</feature>
<feature type="strand" evidence="18">
    <location>
        <begin position="216"/>
        <end position="223"/>
    </location>
</feature>
<feature type="helix" evidence="20">
    <location>
        <begin position="227"/>
        <end position="236"/>
    </location>
</feature>
<feature type="strand" evidence="18">
    <location>
        <begin position="242"/>
        <end position="248"/>
    </location>
</feature>
<feature type="helix" evidence="19">
    <location>
        <begin position="251"/>
        <end position="253"/>
    </location>
</feature>
<feature type="strand" evidence="18">
    <location>
        <begin position="259"/>
        <end position="263"/>
    </location>
</feature>
<feature type="helix" evidence="18">
    <location>
        <begin position="264"/>
        <end position="276"/>
    </location>
</feature>
<feature type="helix" evidence="18">
    <location>
        <begin position="279"/>
        <end position="281"/>
    </location>
</feature>
<feature type="strand" evidence="18">
    <location>
        <begin position="284"/>
        <end position="291"/>
    </location>
</feature>
<feature type="helix" evidence="18">
    <location>
        <begin position="293"/>
        <end position="299"/>
    </location>
</feature>
<feature type="turn" evidence="18">
    <location>
        <begin position="300"/>
        <end position="302"/>
    </location>
</feature>
<feature type="helix" evidence="18">
    <location>
        <begin position="305"/>
        <end position="307"/>
    </location>
</feature>
<feature type="helix" evidence="18">
    <location>
        <begin position="319"/>
        <end position="331"/>
    </location>
</feature>
<feature type="strand" evidence="18">
    <location>
        <begin position="343"/>
        <end position="346"/>
    </location>
</feature>
<feature type="helix" evidence="18">
    <location>
        <begin position="352"/>
        <end position="371"/>
    </location>
</feature>
<comment type="function">
    <text evidence="2 5 8 9 11">Guanine nucleotide-binding proteins (G proteins) are involved as modulators or transducers in various transmembrane signaling systems (PubMed:16388592, PubMed:19151758, PubMed:21212405). Activates effector molecule RhoA by binding and activating RhoGEFs (ARHGEF1/p115RhoGEF, ARHGEF11/PDZ-RhoGEF and ARHGEF12/LARG) (PubMed:16388592). GNA13-dependent Rho signaling subsequently regulates transcription factor AP-1 (activating protein-1) (PubMed:19151758, PubMed:21212405). Promotes tumor cell invasion and metastasis by activating Rho/ROCK signaling pathway (By similarity). Inhibits CDH1-mediated cell adhesion in a process independent from Rho activation (By similarity). In lymphoid follicles, transmits P2RY8- and S1PR2-dependent signals that lead to inhibition of germinal center (GC) B cell growth and migration outside the GC niche.</text>
</comment>
<comment type="subunit">
    <text evidence="2 4 5 7 10 12">G proteins are composed of 3 units; alpha, beta and gamma (PubMed:16388592). The alpha chain contains the guanine nucleotide binding site (PubMed:16388592). Interacts with UBXD5 (By similarity). Interacts with HAX1 (By similarity). Interacts (in GTP-bound form) with PPP5C (via TPR repeats); activates PPP5C phosphatase activity and translocates PPP5C to the cell membrane (By similarity). Interacts with RGS22 (By similarity). Interacts (in GTP-bound form) with ARHGEF1 (PubMed:16388592). Interacts (in GTP-bound form) with ARHGEF11 (via RGS domain) (PubMed:18940608). Interacts (in GTP-bound form) with ARHGEF12 (via RGS domain) (PubMed:16388592). Interacts with CTNND1 (PubMed:15240885). Interacts with GAS2L2 (PubMed:23994616). Interacts with GPR35 (By similarity). Interacts with GPR174 (PubMed:31875850).</text>
</comment>
<comment type="interaction">
    <interactant intactId="EBI-2255627">
        <id>P27601</id>
    </interactant>
    <interactant intactId="EBI-6935014">
        <id>O08915</id>
        <label>Aip</label>
    </interactant>
    <organismsDiffer>false</organismsDiffer>
    <experiments>3</experiments>
</comment>
<comment type="interaction">
    <interactant intactId="EBI-2255627">
        <id>P27601</id>
    </interactant>
    <interactant intactId="EBI-15735216">
        <id>Q9ES67</id>
        <label>Arhgef11</label>
    </interactant>
    <organismsDiffer>true</organismsDiffer>
    <experiments>3</experiments>
</comment>
<comment type="subcellular location">
    <subcellularLocation>
        <location evidence="6">Membrane</location>
        <topology evidence="6">Lipid-anchor</topology>
    </subcellularLocation>
    <subcellularLocation>
        <location evidence="1">Melanosome</location>
    </subcellularLocation>
    <subcellularLocation>
        <location evidence="6">Cytoplasm</location>
    </subcellularLocation>
    <subcellularLocation>
        <location evidence="6">Nucleus</location>
    </subcellularLocation>
    <text>Cytoplasmic in adult somatic cells, but mainly nuclear in spermatids in the testes. Translocates from the cytoplasm to the nucleus during spermatogenesis, hence predominantly observed in the cytoplasm of round spermatids but localized in the nuclei of elongating or elongated spermatids and testicular spermatozoa.</text>
</comment>
<comment type="tissue specificity">
    <text evidence="6">Expressed in brain and testis, as well as in kidney and sperm (at protein level).</text>
</comment>
<comment type="PTM">
    <text evidence="1">Phosphorylation on Thr-203 destabilizes the heterotrimer of alpha, beta and gamma, and inhibits Rho activation.</text>
</comment>
<comment type="disruption phenotype">
    <text evidence="11">Confers increased susceptibility to lymphomagenesis of germinal center origin with bone marrow involvement.</text>
</comment>
<comment type="similarity">
    <text evidence="13">Belongs to the G-alpha family. G(12) subfamily.</text>
</comment>
<sequence length="377" mass="44055">MADFLPSRSVLSVCFPGCVLTNGEAEQQRKSKEIDKCLSREKTYVKRLVKILLLGAGESGKSTFLKQMRIIHGQDFDQRAREEFRPTIYSNVIKGMRVLVDAREKLHIPWGDNKNQLHGDKLMAFDTRAPMAAQGMVETRVFLQYLPAIRALWEDSGIQNAYDRRREFQLGESVKYFLDNLDKLGVPDYIPSQQDILLARRPTKGIHEYDFEIKNVPFKMVDVGGQRSERKRWFECFDSVTSILFLVSSSEFDQVLMEDRQTNRLTESLNIFETIVNNRVFSNVSIILFLNKTDLLEEKVQVVSIKDYFLEFEGDPHCLRDVQKFLVECFRGKRRDQQQRPLYHHFTTAINTENIRLVFRDVKDTILHDNLKQLMLQ</sequence>